<organismHost>
    <name type="scientific">Homo sapiens</name>
    <name type="common">Human</name>
    <dbReference type="NCBI Taxonomy" id="9606"/>
</organismHost>
<sequence>MTSSAMDNNEPKVLEMVYDATILPEGSSMDPNIMDCINRHINMCIQRTYSSSIIAILNRFLTMNKDELNNTQCHIIKEFMTYEQMAIDHYGEYVNAILYQIRKRPNQHHTIDLFKKIKRTPYDTFKVDPVEFVKKVIGFVSILNKYKPVYSYVLYENVLYDEFKCFINYVETKYF</sequence>
<evidence type="ECO:0000250" key="1">
    <source>
        <dbReference type="UniProtKB" id="P14357"/>
    </source>
</evidence>
<evidence type="ECO:0000305" key="2"/>
<gene>
    <name type="primary">OPG036</name>
    <name type="synonym">N2L</name>
</gene>
<feature type="chain" id="PRO_0000099635" description="Protein OPG036">
    <location>
        <begin position="1"/>
        <end position="175"/>
    </location>
</feature>
<keyword id="KW-0244">Early protein</keyword>
<keyword id="KW-1048">Host nucleus</keyword>
<keyword id="KW-0945">Host-virus interaction</keyword>
<keyword id="KW-1090">Inhibition of host innate immune response by virus</keyword>
<keyword id="KW-1092">Inhibition of host IRF3 by virus</keyword>
<keyword id="KW-1113">Inhibition of host RLR pathway by virus</keyword>
<keyword id="KW-1185">Reference proteome</keyword>
<keyword id="KW-0899">Viral immunoevasion</keyword>
<name>PG036_VACCC</name>
<reference key="1">
    <citation type="journal article" date="1990" name="Virology">
        <title>The complete DNA sequence of vaccinia virus.</title>
        <authorList>
            <person name="Goebel S.J."/>
            <person name="Johnson G.P."/>
            <person name="Perkus M.E."/>
            <person name="Davis S.W."/>
            <person name="Winslow J.P."/>
            <person name="Paoletti E."/>
        </authorList>
    </citation>
    <scope>NUCLEOTIDE SEQUENCE [LARGE SCALE GENOMIC DNA]</scope>
</reference>
<reference key="2">
    <citation type="journal article" date="1990" name="Virology">
        <title>Appendix to 'The complete DNA sequence of vaccinia virus'.</title>
        <authorList>
            <person name="Goebel S.J."/>
            <person name="Johnson G.P."/>
            <person name="Perkus M.E."/>
            <person name="Davis S.W."/>
            <person name="Winslow J.P."/>
            <person name="Paoletti E."/>
        </authorList>
    </citation>
    <scope>NUCLEOTIDE SEQUENCE [LARGE SCALE GENOMIC DNA]</scope>
</reference>
<accession>P20641</accession>
<dbReference type="EMBL" id="M35027">
    <property type="protein sequence ID" value="AAA48002.1"/>
    <property type="molecule type" value="Genomic_DNA"/>
</dbReference>
<dbReference type="PIR" id="F42504">
    <property type="entry name" value="F42504"/>
</dbReference>
<dbReference type="Proteomes" id="UP000008269">
    <property type="component" value="Segment"/>
</dbReference>
<dbReference type="GO" id="GO:0042025">
    <property type="term" value="C:host cell nucleus"/>
    <property type="evidence" value="ECO:0007669"/>
    <property type="project" value="UniProtKB-SubCell"/>
</dbReference>
<dbReference type="GO" id="GO:0039548">
    <property type="term" value="P:symbiont-mediated suppression of host cytoplasmic pattern recognition receptor signaling pathway via inhibition of IRF3 activity"/>
    <property type="evidence" value="ECO:0007669"/>
    <property type="project" value="UniProtKB-KW"/>
</dbReference>
<dbReference type="InterPro" id="IPR022819">
    <property type="entry name" value="Poxvirus_Bcl-2-like"/>
</dbReference>
<dbReference type="Pfam" id="PF06227">
    <property type="entry name" value="Poxv_Bcl-2-like"/>
    <property type="match status" value="1"/>
</dbReference>
<comment type="function">
    <text evidence="1">Plays a role in the inhibition of host innate immune response. Within the host nucleus, inhibits activation of interferon-beta promoter by inhibiting IRF3 activation.</text>
</comment>
<comment type="subcellular location">
    <subcellularLocation>
        <location evidence="1">Host nucleus</location>
    </subcellularLocation>
</comment>
<comment type="induction">
    <text evidence="1">Expressed in the early phase of the viral replicative cycle.</text>
</comment>
<comment type="similarity">
    <text evidence="2">Belongs to the poxviridae OPG036 family.</text>
</comment>
<organism>
    <name type="scientific">Vaccinia virus (strain Copenhagen)</name>
    <name type="common">VACV</name>
    <dbReference type="NCBI Taxonomy" id="10249"/>
    <lineage>
        <taxon>Viruses</taxon>
        <taxon>Varidnaviria</taxon>
        <taxon>Bamfordvirae</taxon>
        <taxon>Nucleocytoviricota</taxon>
        <taxon>Pokkesviricetes</taxon>
        <taxon>Chitovirales</taxon>
        <taxon>Poxviridae</taxon>
        <taxon>Chordopoxvirinae</taxon>
        <taxon>Orthopoxvirus</taxon>
        <taxon>Vaccinia virus</taxon>
    </lineage>
</organism>
<proteinExistence type="inferred from homology"/>
<protein>
    <recommendedName>
        <fullName>Protein OPG036</fullName>
    </recommendedName>
    <alternativeName>
        <fullName>Protein N2</fullName>
    </alternativeName>
</protein>